<evidence type="ECO:0000250" key="1"/>
<evidence type="ECO:0000255" key="2"/>
<evidence type="ECO:0000256" key="3">
    <source>
        <dbReference type="SAM" id="MobiDB-lite"/>
    </source>
</evidence>
<evidence type="ECO:0000305" key="4"/>
<keyword id="KW-0175">Coiled coil</keyword>
<keyword id="KW-0272">Extracellular matrix</keyword>
<keyword id="KW-0301">Gamma-carboxyglutamic acid</keyword>
<keyword id="KW-1185">Reference proteome</keyword>
<keyword id="KW-0964">Secreted</keyword>
<keyword id="KW-0732">Signal</keyword>
<keyword id="KW-0765">Sulfation</keyword>
<organism>
    <name type="scientific">Danio rerio</name>
    <name type="common">Zebrafish</name>
    <name type="synonym">Brachydanio rerio</name>
    <dbReference type="NCBI Taxonomy" id="7955"/>
    <lineage>
        <taxon>Eukaryota</taxon>
        <taxon>Metazoa</taxon>
        <taxon>Chordata</taxon>
        <taxon>Craniata</taxon>
        <taxon>Vertebrata</taxon>
        <taxon>Euteleostomi</taxon>
        <taxon>Actinopterygii</taxon>
        <taxon>Neopterygii</taxon>
        <taxon>Teleostei</taxon>
        <taxon>Ostariophysi</taxon>
        <taxon>Cypriniformes</taxon>
        <taxon>Danionidae</taxon>
        <taxon>Danioninae</taxon>
        <taxon>Danio</taxon>
    </lineage>
</organism>
<gene>
    <name type="primary">ucma</name>
    <name type="ORF">zgc:85838</name>
</gene>
<name>UCMA_DANRE</name>
<proteinExistence type="evidence at transcript level"/>
<reference key="1">
    <citation type="submission" date="2004-03" db="EMBL/GenBank/DDBJ databases">
        <authorList>
            <consortium name="NIH - Zebrafish Gene Collection (ZGC) project"/>
        </authorList>
    </citation>
    <scope>NUCLEOTIDE SEQUENCE [LARGE SCALE MRNA]</scope>
    <source>
        <tissue>Embryo</tissue>
    </source>
</reference>
<accession>Q6NWB6</accession>
<protein>
    <recommendedName>
        <fullName>Unique cartilage matrix-associated protein</fullName>
    </recommendedName>
    <component>
        <recommendedName>
            <fullName>Unique cartilage matrix-associated protein C-terminal fragment</fullName>
            <shortName>Ucma-C</shortName>
        </recommendedName>
        <alternativeName>
            <fullName>Gla-rich protein</fullName>
            <shortName>GRP</shortName>
        </alternativeName>
    </component>
</protein>
<comment type="function">
    <text evidence="1">May be involved in the negative control of osteogenic differentiation of osteochondrogenic precursor cells in peripheral zones of fetal cartilage and at the cartilage-bone interface.</text>
</comment>
<comment type="subcellular location">
    <subcellularLocation>
        <location evidence="1">Secreted</location>
        <location evidence="1">Extracellular space</location>
        <location evidence="1">Extracellular matrix</location>
    </subcellularLocation>
</comment>
<comment type="PTM">
    <text evidence="1">Proteolytically cleaved by a furin-like convertase to generate a persistent C-terminal fragment found in almost the entire cartilage matrix, and affecting osteoblast differentiation.</text>
</comment>
<comment type="PTM">
    <text evidence="1">Sulfated on tyrosine residues.</text>
</comment>
<comment type="similarity">
    <text evidence="4">Belongs to the UCMA family.</text>
</comment>
<sequence>MSWTQPALLTCLLVLSAITLFDGADSAVSDKRDAVNPQGALRKIFMPEADAASFFKRRSRRAVKTQDEINAEQRQRLAADERRREYHEEQRNKYENYAEEENDEQDERTREKTEQWREFHYDGLDPSYEYNRHTI</sequence>
<feature type="signal peptide" evidence="2">
    <location>
        <begin position="1"/>
        <end position="26"/>
    </location>
</feature>
<feature type="chain" id="PRO_0000371310" description="Unique cartilage matrix-associated protein">
    <location>
        <begin position="27"/>
        <end position="135"/>
    </location>
</feature>
<feature type="propeptide" id="PRO_0000371311" description="Ucma-N" evidence="1">
    <location>
        <begin position="28"/>
        <end position="61"/>
    </location>
</feature>
<feature type="chain" id="PRO_0000371312" description="Unique cartilage matrix-associated protein C-terminal fragment" evidence="1">
    <location>
        <begin position="62"/>
        <end position="135"/>
    </location>
</feature>
<feature type="region of interest" description="Disordered" evidence="3">
    <location>
        <begin position="65"/>
        <end position="135"/>
    </location>
</feature>
<feature type="coiled-coil region" evidence="2">
    <location>
        <begin position="64"/>
        <end position="114"/>
    </location>
</feature>
<feature type="compositionally biased region" description="Basic and acidic residues" evidence="3">
    <location>
        <begin position="65"/>
        <end position="96"/>
    </location>
</feature>
<feature type="compositionally biased region" description="Acidic residues" evidence="3">
    <location>
        <begin position="97"/>
        <end position="106"/>
    </location>
</feature>
<feature type="compositionally biased region" description="Basic and acidic residues" evidence="3">
    <location>
        <begin position="107"/>
        <end position="123"/>
    </location>
</feature>
<feature type="modified residue" description="4-carboxyglutamate" evidence="1">
    <location>
        <position position="68"/>
    </location>
</feature>
<feature type="modified residue" description="4-carboxyglutamate" evidence="1">
    <location>
        <position position="72"/>
    </location>
</feature>
<feature type="modified residue" description="4-carboxyglutamate" evidence="1">
    <location>
        <position position="81"/>
    </location>
</feature>
<feature type="modified residue" description="4-carboxyglutamate" evidence="1">
    <location>
        <position position="85"/>
    </location>
</feature>
<feature type="modified residue" description="4-carboxyglutamate" evidence="1">
    <location>
        <position position="88"/>
    </location>
</feature>
<feature type="modified residue" description="4-carboxyglutamate" evidence="1">
    <location>
        <position position="89"/>
    </location>
</feature>
<feature type="modified residue" description="4-carboxyglutamate" evidence="1">
    <location>
        <position position="95"/>
    </location>
</feature>
<feature type="modified residue" description="4-carboxyglutamate" evidence="1">
    <location>
        <position position="99"/>
    </location>
</feature>
<feature type="modified residue" description="4-carboxyglutamate" evidence="1">
    <location>
        <position position="100"/>
    </location>
</feature>
<feature type="modified residue" description="4-carboxyglutamate" evidence="1">
    <location>
        <position position="104"/>
    </location>
</feature>
<feature type="modified residue" description="4-carboxyglutamate" evidence="1">
    <location>
        <position position="107"/>
    </location>
</feature>
<feature type="modified residue" description="4-carboxyglutamate" evidence="1">
    <location>
        <position position="111"/>
    </location>
</feature>
<feature type="modified residue" description="4-carboxyglutamate" evidence="1">
    <location>
        <position position="114"/>
    </location>
</feature>
<dbReference type="EMBL" id="BC067652">
    <property type="protein sequence ID" value="AAH67652.1"/>
    <property type="molecule type" value="mRNA"/>
</dbReference>
<dbReference type="RefSeq" id="NP_998099.1">
    <property type="nucleotide sequence ID" value="NM_212934.1"/>
</dbReference>
<dbReference type="FunCoup" id="Q6NWB6">
    <property type="interactions" value="1176"/>
</dbReference>
<dbReference type="STRING" id="7955.ENSDARP00000135381"/>
<dbReference type="PaxDb" id="7955-ENSDARP00000026630"/>
<dbReference type="Ensembl" id="ENSDART00000171904">
    <property type="protein sequence ID" value="ENSDARP00000135381"/>
    <property type="gene ID" value="ENSDARG00000005485"/>
</dbReference>
<dbReference type="GeneID" id="405870"/>
<dbReference type="KEGG" id="dre:405870"/>
<dbReference type="AGR" id="ZFIN:ZDB-GENE-040426-2368"/>
<dbReference type="CTD" id="405870"/>
<dbReference type="ZFIN" id="ZDB-GENE-040426-2368">
    <property type="gene designation" value="ucmab"/>
</dbReference>
<dbReference type="eggNOG" id="ENOG502S1J9">
    <property type="taxonomic scope" value="Eukaryota"/>
</dbReference>
<dbReference type="HOGENOM" id="CLU_2637365_0_0_1"/>
<dbReference type="InParanoid" id="Q6NWB6"/>
<dbReference type="OMA" id="TMLQEGT"/>
<dbReference type="OrthoDB" id="8907123at2759"/>
<dbReference type="PhylomeDB" id="Q6NWB6"/>
<dbReference type="TreeFam" id="TF332568"/>
<dbReference type="PRO" id="PR:Q6NWB6"/>
<dbReference type="Proteomes" id="UP000000437">
    <property type="component" value="Chromosome 25"/>
</dbReference>
<dbReference type="Bgee" id="ENSDARG00000005485">
    <property type="expression patterns" value="Expressed in larva and 21 other cell types or tissues"/>
</dbReference>
<dbReference type="ExpressionAtlas" id="Q6NWB6">
    <property type="expression patterns" value="baseline"/>
</dbReference>
<dbReference type="GO" id="GO:0031012">
    <property type="term" value="C:extracellular matrix"/>
    <property type="evidence" value="ECO:0000318"/>
    <property type="project" value="GO_Central"/>
</dbReference>
<dbReference type="GO" id="GO:0005576">
    <property type="term" value="C:extracellular region"/>
    <property type="evidence" value="ECO:0007669"/>
    <property type="project" value="UniProtKB-KW"/>
</dbReference>
<dbReference type="GO" id="GO:0048706">
    <property type="term" value="P:embryonic skeletal system development"/>
    <property type="evidence" value="ECO:0000315"/>
    <property type="project" value="ZFIN"/>
</dbReference>
<dbReference type="GO" id="GO:0045667">
    <property type="term" value="P:regulation of osteoblast differentiation"/>
    <property type="evidence" value="ECO:0007669"/>
    <property type="project" value="InterPro"/>
</dbReference>
<dbReference type="InterPro" id="IPR031386">
    <property type="entry name" value="UCMA"/>
</dbReference>
<dbReference type="PANTHER" id="PTHR28647">
    <property type="entry name" value="UNIQUE CARTILAGE MATRIX-ASSOCIATED PROTEIN"/>
    <property type="match status" value="1"/>
</dbReference>
<dbReference type="PANTHER" id="PTHR28647:SF2">
    <property type="entry name" value="UNIQUE CARTILAGE MATRIX-ASSOCIATED PROTEIN"/>
    <property type="match status" value="1"/>
</dbReference>
<dbReference type="Pfam" id="PF17085">
    <property type="entry name" value="UCMA"/>
    <property type="match status" value="1"/>
</dbReference>